<sequence length="404" mass="44495">MKLPIYLDYSATTPVDPRVAQKMSECLLVDGNFGNPASRSHVFGWKAEEAVENARRQVADLVNADPREIVWTSGATESDNLAIKGAAHFYATKGKHLITTKIEHKAVLDTMRQLEREGFEVTYLEPTTDGIVTPAMIEAALREDTILVSVIHVNNEIGTINDIAAIGELTRSKGILLHVDAAQSTGKVDIDLSKLKVDLMSFSAHKTYGPKGIGALYVSRKPRVRIEATMHGGGHERGMRSGTLATHQIVGMGEAFRVAKEDMAAENVRIKALSDRFYKQVENLEELYINGSMTARVPHNLNLSFNYVEGESLIMALKDLAVSSGSACTSASLEPSYVLRALGRNDELAHSSIRFTFGRFTTEEQVDYAAQKVCEAVNKLRVLSPLWDMYKDGVDISKIEWAAH</sequence>
<reference key="1">
    <citation type="journal article" date="2009" name="Genome Biol.">
        <title>Genomic and genetic analyses of diversity and plant interactions of Pseudomonas fluorescens.</title>
        <authorList>
            <person name="Silby M.W."/>
            <person name="Cerdeno-Tarraga A.M."/>
            <person name="Vernikos G.S."/>
            <person name="Giddens S.R."/>
            <person name="Jackson R.W."/>
            <person name="Preston G.M."/>
            <person name="Zhang X.-X."/>
            <person name="Moon C.D."/>
            <person name="Gehrig S.M."/>
            <person name="Godfrey S.A.C."/>
            <person name="Knight C.G."/>
            <person name="Malone J.G."/>
            <person name="Robinson Z."/>
            <person name="Spiers A.J."/>
            <person name="Harris S."/>
            <person name="Challis G.L."/>
            <person name="Yaxley A.M."/>
            <person name="Harris D."/>
            <person name="Seeger K."/>
            <person name="Murphy L."/>
            <person name="Rutter S."/>
            <person name="Squares R."/>
            <person name="Quail M.A."/>
            <person name="Saunders E."/>
            <person name="Mavromatis K."/>
            <person name="Brettin T.S."/>
            <person name="Bentley S.D."/>
            <person name="Hothersall J."/>
            <person name="Stephens E."/>
            <person name="Thomas C.M."/>
            <person name="Parkhill J."/>
            <person name="Levy S.B."/>
            <person name="Rainey P.B."/>
            <person name="Thomson N.R."/>
        </authorList>
    </citation>
    <scope>NUCLEOTIDE SEQUENCE [LARGE SCALE GENOMIC DNA]</scope>
    <source>
        <strain>SBW25</strain>
    </source>
</reference>
<gene>
    <name evidence="1" type="primary">iscS</name>
    <name type="ordered locus">PFLU_5068</name>
</gene>
<organism>
    <name type="scientific">Pseudomonas fluorescens (strain SBW25)</name>
    <dbReference type="NCBI Taxonomy" id="216595"/>
    <lineage>
        <taxon>Bacteria</taxon>
        <taxon>Pseudomonadati</taxon>
        <taxon>Pseudomonadota</taxon>
        <taxon>Gammaproteobacteria</taxon>
        <taxon>Pseudomonadales</taxon>
        <taxon>Pseudomonadaceae</taxon>
        <taxon>Pseudomonas</taxon>
    </lineage>
</organism>
<accession>C3K1M5</accession>
<comment type="function">
    <text evidence="1">Master enzyme that delivers sulfur to a number of partners involved in Fe-S cluster assembly, tRNA modification or cofactor biosynthesis. Catalyzes the removal of elemental sulfur atoms from cysteine to produce alanine. Functions as a sulfur delivery protein for Fe-S cluster synthesis onto IscU, an Fe-S scaffold assembly protein, as well as other S acceptor proteins.</text>
</comment>
<comment type="catalytic activity">
    <reaction evidence="1">
        <text>(sulfur carrier)-H + L-cysteine = (sulfur carrier)-SH + L-alanine</text>
        <dbReference type="Rhea" id="RHEA:43892"/>
        <dbReference type="Rhea" id="RHEA-COMP:14737"/>
        <dbReference type="Rhea" id="RHEA-COMP:14739"/>
        <dbReference type="ChEBI" id="CHEBI:29917"/>
        <dbReference type="ChEBI" id="CHEBI:35235"/>
        <dbReference type="ChEBI" id="CHEBI:57972"/>
        <dbReference type="ChEBI" id="CHEBI:64428"/>
        <dbReference type="EC" id="2.8.1.7"/>
    </reaction>
</comment>
<comment type="cofactor">
    <cofactor evidence="1">
        <name>pyridoxal 5'-phosphate</name>
        <dbReference type="ChEBI" id="CHEBI:597326"/>
    </cofactor>
</comment>
<comment type="pathway">
    <text evidence="1">Cofactor biosynthesis; iron-sulfur cluster biosynthesis.</text>
</comment>
<comment type="subunit">
    <text evidence="1">Homodimer. Forms a heterotetramer with IscU, interacts with other sulfur acceptors.</text>
</comment>
<comment type="subcellular location">
    <subcellularLocation>
        <location evidence="1">Cytoplasm</location>
    </subcellularLocation>
</comment>
<comment type="similarity">
    <text evidence="1">Belongs to the class-V pyridoxal-phosphate-dependent aminotransferase family. NifS/IscS subfamily.</text>
</comment>
<proteinExistence type="inferred from homology"/>
<dbReference type="EC" id="2.8.1.7" evidence="1"/>
<dbReference type="EMBL" id="AM181176">
    <property type="protein sequence ID" value="CAY52065.1"/>
    <property type="molecule type" value="Genomic_DNA"/>
</dbReference>
<dbReference type="RefSeq" id="WP_010207898.1">
    <property type="nucleotide sequence ID" value="NC_012660.1"/>
</dbReference>
<dbReference type="SMR" id="C3K1M5"/>
<dbReference type="STRING" id="294.SRM1_04656"/>
<dbReference type="eggNOG" id="COG1104">
    <property type="taxonomic scope" value="Bacteria"/>
</dbReference>
<dbReference type="HOGENOM" id="CLU_003433_0_2_6"/>
<dbReference type="OrthoDB" id="9808002at2"/>
<dbReference type="UniPathway" id="UPA00266"/>
<dbReference type="GO" id="GO:1990221">
    <property type="term" value="C:L-cysteine desulfurase complex"/>
    <property type="evidence" value="ECO:0007669"/>
    <property type="project" value="UniProtKB-ARBA"/>
</dbReference>
<dbReference type="GO" id="GO:0051537">
    <property type="term" value="F:2 iron, 2 sulfur cluster binding"/>
    <property type="evidence" value="ECO:0007669"/>
    <property type="project" value="UniProtKB-UniRule"/>
</dbReference>
<dbReference type="GO" id="GO:0031071">
    <property type="term" value="F:cysteine desulfurase activity"/>
    <property type="evidence" value="ECO:0007669"/>
    <property type="project" value="UniProtKB-UniRule"/>
</dbReference>
<dbReference type="GO" id="GO:0046872">
    <property type="term" value="F:metal ion binding"/>
    <property type="evidence" value="ECO:0007669"/>
    <property type="project" value="UniProtKB-KW"/>
</dbReference>
<dbReference type="GO" id="GO:0030170">
    <property type="term" value="F:pyridoxal phosphate binding"/>
    <property type="evidence" value="ECO:0007669"/>
    <property type="project" value="UniProtKB-UniRule"/>
</dbReference>
<dbReference type="GO" id="GO:0044571">
    <property type="term" value="P:[2Fe-2S] cluster assembly"/>
    <property type="evidence" value="ECO:0007669"/>
    <property type="project" value="UniProtKB-UniRule"/>
</dbReference>
<dbReference type="FunFam" id="3.40.640.10:FF:000003">
    <property type="entry name" value="Cysteine desulfurase IscS"/>
    <property type="match status" value="1"/>
</dbReference>
<dbReference type="FunFam" id="3.90.1150.10:FF:000002">
    <property type="entry name" value="Cysteine desulfurase IscS"/>
    <property type="match status" value="1"/>
</dbReference>
<dbReference type="Gene3D" id="3.90.1150.10">
    <property type="entry name" value="Aspartate Aminotransferase, domain 1"/>
    <property type="match status" value="1"/>
</dbReference>
<dbReference type="Gene3D" id="3.40.640.10">
    <property type="entry name" value="Type I PLP-dependent aspartate aminotransferase-like (Major domain)"/>
    <property type="match status" value="1"/>
</dbReference>
<dbReference type="HAMAP" id="MF_00331">
    <property type="entry name" value="Cys_desulf_IscS"/>
    <property type="match status" value="1"/>
</dbReference>
<dbReference type="InterPro" id="IPR000192">
    <property type="entry name" value="Aminotrans_V_dom"/>
</dbReference>
<dbReference type="InterPro" id="IPR020578">
    <property type="entry name" value="Aminotrans_V_PyrdxlP_BS"/>
</dbReference>
<dbReference type="InterPro" id="IPR010240">
    <property type="entry name" value="Cys_deSase_IscS"/>
</dbReference>
<dbReference type="InterPro" id="IPR016454">
    <property type="entry name" value="Cysteine_dSase"/>
</dbReference>
<dbReference type="InterPro" id="IPR015424">
    <property type="entry name" value="PyrdxlP-dep_Trfase"/>
</dbReference>
<dbReference type="InterPro" id="IPR015421">
    <property type="entry name" value="PyrdxlP-dep_Trfase_major"/>
</dbReference>
<dbReference type="InterPro" id="IPR015422">
    <property type="entry name" value="PyrdxlP-dep_Trfase_small"/>
</dbReference>
<dbReference type="NCBIfam" id="TIGR02006">
    <property type="entry name" value="IscS"/>
    <property type="match status" value="1"/>
</dbReference>
<dbReference type="NCBIfam" id="NF010611">
    <property type="entry name" value="PRK14012.1"/>
    <property type="match status" value="1"/>
</dbReference>
<dbReference type="PANTHER" id="PTHR11601:SF34">
    <property type="entry name" value="CYSTEINE DESULFURASE"/>
    <property type="match status" value="1"/>
</dbReference>
<dbReference type="PANTHER" id="PTHR11601">
    <property type="entry name" value="CYSTEINE DESULFURYLASE FAMILY MEMBER"/>
    <property type="match status" value="1"/>
</dbReference>
<dbReference type="Pfam" id="PF00266">
    <property type="entry name" value="Aminotran_5"/>
    <property type="match status" value="1"/>
</dbReference>
<dbReference type="PIRSF" id="PIRSF005572">
    <property type="entry name" value="NifS"/>
    <property type="match status" value="1"/>
</dbReference>
<dbReference type="SUPFAM" id="SSF53383">
    <property type="entry name" value="PLP-dependent transferases"/>
    <property type="match status" value="1"/>
</dbReference>
<dbReference type="PROSITE" id="PS00595">
    <property type="entry name" value="AA_TRANSFER_CLASS_5"/>
    <property type="match status" value="1"/>
</dbReference>
<name>ISCS_PSEFS</name>
<keyword id="KW-0001">2Fe-2S</keyword>
<keyword id="KW-0963">Cytoplasm</keyword>
<keyword id="KW-0408">Iron</keyword>
<keyword id="KW-0411">Iron-sulfur</keyword>
<keyword id="KW-0479">Metal-binding</keyword>
<keyword id="KW-0663">Pyridoxal phosphate</keyword>
<keyword id="KW-0808">Transferase</keyword>
<protein>
    <recommendedName>
        <fullName evidence="1">Cysteine desulfurase IscS</fullName>
        <ecNumber evidence="1">2.8.1.7</ecNumber>
    </recommendedName>
</protein>
<evidence type="ECO:0000255" key="1">
    <source>
        <dbReference type="HAMAP-Rule" id="MF_00331"/>
    </source>
</evidence>
<feature type="chain" id="PRO_1000205172" description="Cysteine desulfurase IscS">
    <location>
        <begin position="1"/>
        <end position="404"/>
    </location>
</feature>
<feature type="active site" description="Cysteine persulfide intermediate" evidence="1">
    <location>
        <position position="328"/>
    </location>
</feature>
<feature type="binding site" evidence="1">
    <location>
        <begin position="75"/>
        <end position="76"/>
    </location>
    <ligand>
        <name>pyridoxal 5'-phosphate</name>
        <dbReference type="ChEBI" id="CHEBI:597326"/>
    </ligand>
</feature>
<feature type="binding site" evidence="1">
    <location>
        <position position="155"/>
    </location>
    <ligand>
        <name>pyridoxal 5'-phosphate</name>
        <dbReference type="ChEBI" id="CHEBI:597326"/>
    </ligand>
</feature>
<feature type="binding site" evidence="1">
    <location>
        <position position="183"/>
    </location>
    <ligand>
        <name>pyridoxal 5'-phosphate</name>
        <dbReference type="ChEBI" id="CHEBI:597326"/>
    </ligand>
</feature>
<feature type="binding site" evidence="1">
    <location>
        <begin position="203"/>
        <end position="205"/>
    </location>
    <ligand>
        <name>pyridoxal 5'-phosphate</name>
        <dbReference type="ChEBI" id="CHEBI:597326"/>
    </ligand>
</feature>
<feature type="binding site" evidence="1">
    <location>
        <position position="243"/>
    </location>
    <ligand>
        <name>pyridoxal 5'-phosphate</name>
        <dbReference type="ChEBI" id="CHEBI:597326"/>
    </ligand>
</feature>
<feature type="binding site" description="via persulfide group" evidence="1">
    <location>
        <position position="328"/>
    </location>
    <ligand>
        <name>[2Fe-2S] cluster</name>
        <dbReference type="ChEBI" id="CHEBI:190135"/>
        <note>ligand shared with IscU</note>
    </ligand>
</feature>
<feature type="modified residue" description="N6-(pyridoxal phosphate)lysine" evidence="1">
    <location>
        <position position="206"/>
    </location>
</feature>